<comment type="function">
    <text evidence="1">Cleaves viral precursor proteins (pTP, pIIIa, pVI, pVII, pVIII, and pX) inside newly assembled particles giving rise to mature virions. Protease complexed to its cofactor slides along the viral DNA to specifically locate and cleave the viral precursors. Mature virions have a weakened organization compared to the unmature virions, thereby facilitating subsequent uncoating. Without maturation, the particle lacks infectivity and is unable to uncoat. Late in adenovirus infection, in the cytoplasm, may participate in the cytoskeleton destruction. Cleaves host cell cytoskeletal keratins K7 and K18.</text>
</comment>
<comment type="catalytic activity">
    <reaction evidence="1">
        <text>Cleaves proteins of the adenovirus and its host cell at two consensus sites: -Yaa-Xaa-Gly-Gly-|-Xaa- and -Yaa-Xaa-Gly-Xaa-|-Gly- (in which Yaa is Met, Ile or Leu, and Xaa is any amino acid).</text>
        <dbReference type="EC" id="3.4.22.39"/>
    </reaction>
</comment>
<comment type="activity regulation">
    <text evidence="1">Requires DNA and protease cofactor for maximal activation. Inside nascent virions, becomes partially activated by binding to the viral DNA, allowing it to cleave the cofactor that binds to the protease and fully activates it. Actin, like the viral protease cofactor, seems to act as a cofactor in the cleavage of cytokeratin 18 and of actin itself.</text>
</comment>
<comment type="subunit">
    <text evidence="1">Interacts with protease cofactor pVI-C; this interaction is necessary for protease activation.</text>
</comment>
<comment type="subcellular location">
    <subcellularLocation>
        <location evidence="1">Virion</location>
    </subcellularLocation>
    <subcellularLocation>
        <location evidence="1">Host nucleus</location>
    </subcellularLocation>
    <text evidence="1">Present in about 10 copies per virion.</text>
</comment>
<comment type="induction">
    <text evidence="1">Expressed in the late phase of the viral replicative cycle.</text>
</comment>
<comment type="miscellaneous">
    <text evidence="1">All late proteins expressed from the major late promoter are produced by alternative splicing and alternative polyadenylation of the same gene giving rise to non-overlapping ORFs. A leader sequence is present in the N-terminus of all these mRNAs and is recognized by the viral shutoff protein to provide expression although conventional translation via ribosome scanning from the cap has been shut off in the host cell.</text>
</comment>
<comment type="similarity">
    <text evidence="1">Belongs to the peptidase C5 family.</text>
</comment>
<protein>
    <recommendedName>
        <fullName evidence="1">Protease</fullName>
        <ecNumber evidence="1">3.4.22.39</ecNumber>
    </recommendedName>
    <alternativeName>
        <fullName evidence="1">Adenain</fullName>
    </alternativeName>
    <alternativeName>
        <fullName evidence="1">Adenovirus protease</fullName>
        <shortName evidence="1">AVP</shortName>
    </alternativeName>
    <alternativeName>
        <fullName evidence="1">Adenovirus proteinase</fullName>
    </alternativeName>
    <alternativeName>
        <fullName evidence="1">Endoprotease</fullName>
    </alternativeName>
</protein>
<organismHost>
    <name type="scientific">Homo sapiens</name>
    <name type="common">Human</name>
    <dbReference type="NCBI Taxonomy" id="9606"/>
</organismHost>
<accession>P10381</accession>
<reference key="1">
    <citation type="journal article" date="1988" name="Nucleic Acids Res.">
        <title>Sequence of the human adenovirus type 3 protease.</title>
        <authorList>
            <person name="Weber J.M."/>
            <person name="Houde A."/>
        </authorList>
    </citation>
    <scope>NUCLEOTIDE SEQUENCE [GENOMIC DNA]</scope>
</reference>
<proteinExistence type="inferred from homology"/>
<keyword id="KW-0068">Autocatalytic cleavage</keyword>
<keyword id="KW-1015">Disulfide bond</keyword>
<keyword id="KW-0238">DNA-binding</keyword>
<keyword id="KW-1048">Host nucleus</keyword>
<keyword id="KW-0378">Hydrolase</keyword>
<keyword id="KW-0426">Late protein</keyword>
<keyword id="KW-0645">Protease</keyword>
<keyword id="KW-0788">Thiol protease</keyword>
<keyword id="KW-0946">Virion</keyword>
<dbReference type="EC" id="3.4.22.39" evidence="1"/>
<dbReference type="EMBL" id="X13271">
    <property type="protein sequence ID" value="CAA31636.1"/>
    <property type="molecule type" value="Genomic_DNA"/>
</dbReference>
<dbReference type="PIR" id="S01988">
    <property type="entry name" value="S01988"/>
</dbReference>
<dbReference type="SMR" id="P10381"/>
<dbReference type="MEROPS" id="C05.001"/>
<dbReference type="GO" id="GO:0042025">
    <property type="term" value="C:host cell nucleus"/>
    <property type="evidence" value="ECO:0007669"/>
    <property type="project" value="UniProtKB-SubCell"/>
</dbReference>
<dbReference type="GO" id="GO:0044423">
    <property type="term" value="C:virion component"/>
    <property type="evidence" value="ECO:0007669"/>
    <property type="project" value="UniProtKB-UniRule"/>
</dbReference>
<dbReference type="GO" id="GO:0004197">
    <property type="term" value="F:cysteine-type endopeptidase activity"/>
    <property type="evidence" value="ECO:0007669"/>
    <property type="project" value="UniProtKB-UniRule"/>
</dbReference>
<dbReference type="GO" id="GO:0003677">
    <property type="term" value="F:DNA binding"/>
    <property type="evidence" value="ECO:0007669"/>
    <property type="project" value="UniProtKB-UniRule"/>
</dbReference>
<dbReference type="GO" id="GO:0006508">
    <property type="term" value="P:proteolysis"/>
    <property type="evidence" value="ECO:0007669"/>
    <property type="project" value="UniProtKB-KW"/>
</dbReference>
<dbReference type="Gene3D" id="3.40.395.10">
    <property type="entry name" value="Adenoviral Proteinase, Chain A"/>
    <property type="match status" value="1"/>
</dbReference>
<dbReference type="HAMAP" id="MF_04059">
    <property type="entry name" value="ADV_PRO"/>
    <property type="match status" value="1"/>
</dbReference>
<dbReference type="InterPro" id="IPR038765">
    <property type="entry name" value="Papain-like_cys_pep_sf"/>
</dbReference>
<dbReference type="InterPro" id="IPR000855">
    <property type="entry name" value="Peptidase_C5"/>
</dbReference>
<dbReference type="Pfam" id="PF00770">
    <property type="entry name" value="Peptidase_C5"/>
    <property type="match status" value="1"/>
</dbReference>
<dbReference type="PIRSF" id="PIRSF001218">
    <property type="entry name" value="Protease_ADV"/>
    <property type="match status" value="1"/>
</dbReference>
<dbReference type="PRINTS" id="PR00703">
    <property type="entry name" value="ADVENDOPTASE"/>
</dbReference>
<dbReference type="SUPFAM" id="SSF54001">
    <property type="entry name" value="Cysteine proteinases"/>
    <property type="match status" value="1"/>
</dbReference>
<gene>
    <name evidence="1" type="primary">L3</name>
</gene>
<name>PRO_ADE03</name>
<evidence type="ECO:0000255" key="1">
    <source>
        <dbReference type="HAMAP-Rule" id="MF_04059"/>
    </source>
</evidence>
<organism>
    <name type="scientific">Human adenovirus B serotype 3</name>
    <name type="common">HAdV-3</name>
    <name type="synonym">Human adenovirus 3</name>
    <dbReference type="NCBI Taxonomy" id="45659"/>
    <lineage>
        <taxon>Viruses</taxon>
        <taxon>Varidnaviria</taxon>
        <taxon>Bamfordvirae</taxon>
        <taxon>Preplasmiviricota</taxon>
        <taxon>Tectiliviricetes</taxon>
        <taxon>Rowavirales</taxon>
        <taxon>Adenoviridae</taxon>
        <taxon>Mastadenovirus</taxon>
        <taxon>Human mastadenovirus B</taxon>
    </lineage>
</organism>
<feature type="chain" id="PRO_0000218024" description="Protease">
    <location>
        <begin position="1"/>
        <end position="209"/>
    </location>
</feature>
<feature type="active site" evidence="1">
    <location>
        <position position="60"/>
    </location>
</feature>
<feature type="active site" evidence="1">
    <location>
        <position position="77"/>
    </location>
</feature>
<feature type="active site" evidence="1">
    <location>
        <position position="127"/>
    </location>
</feature>
<feature type="site" description="Cleavage; by autolysis" evidence="1">
    <location>
        <begin position="57"/>
        <end position="58"/>
    </location>
</feature>
<feature type="disulfide bond" description="Interchain (with C-10 in cleaved protease cofactor pVI-C)" evidence="1">
    <location>
        <position position="109"/>
    </location>
</feature>
<sequence>MTCGSGNGSSEQELKAIVRDLGCGPYFLGTFDKRFPGFMAPDKLACAIVNTAGRETGGEHWLAFGWNPRYNTCYLFDPFGFSDERLKQIYQFEYEGLLRRSALATKDRCITLEKSTQSVQGPRSAACGLFCCMFLHAFVHWPDRPMDGNPTMKLVTGVSNSMLQSPQVQPTLRRNQEVLYRFLNTHSSYFRSHRARIERATAFDRMDMQ</sequence>